<evidence type="ECO:0000250" key="1"/>
<evidence type="ECO:0000255" key="2">
    <source>
        <dbReference type="PROSITE-ProRule" id="PRU00794"/>
    </source>
</evidence>
<evidence type="ECO:0000269" key="3">
    <source>
    </source>
</evidence>
<evidence type="ECO:0000269" key="4">
    <source>
    </source>
</evidence>
<evidence type="ECO:0000305" key="5"/>
<keyword id="KW-0378">Hydrolase</keyword>
<keyword id="KW-0460">Magnesium</keyword>
<keyword id="KW-0464">Manganese</keyword>
<keyword id="KW-0479">Metal-binding</keyword>
<keyword id="KW-1185">Reference proteome</keyword>
<sequence length="369" mass="41314">MDSVSLSEVTVIKGTTHLGFMHSFRQPFCGVKISPKFYLSKVDGPKAISSSSNTKSQFVYGGGSIAATSDSGYKMNGVNLKSRTLMSSAVKERSLLDAYDDEYGGVIVDHGKLPSNPYAFASMLRASLSDWRRKGKKGVWLKLPVEQSELVPIAIKEGFEYHHAEKGYVMLTYWIPEEEPSMLPANASHQVGVGGFVLNQHKEVLVVQEKYCAPSITGLWKLPTGFINESEEIFSGAVREVKEETGVDTEFSEVIAFRHAHNVAFEKSDLFFICMLRPLSDKIIIDALEIKAAKWMPLAEFVEQPMIRGDKMFKRVIEICEARLSHRYCGLSPHRLVSTFDGKPSSLYYNVVDDDHDPSHSNCSTEFYR</sequence>
<gene>
    <name type="primary">NUDT8</name>
    <name type="synonym">NUDX8</name>
    <name type="ordered locus">At5g47240</name>
    <name type="ORF">MQL5.10</name>
</gene>
<name>NUDT8_ARATH</name>
<accession>Q8L7W2</accession>
<accession>Q8LAJ0</accession>
<accession>Q9LVT5</accession>
<reference key="1">
    <citation type="journal article" date="2000" name="DNA Res.">
        <title>Structural analysis of Arabidopsis thaliana chromosome 5. X. Sequence features of the regions of 3,076,755 bp covered by sixty P1 and TAC clones.</title>
        <authorList>
            <person name="Sato S."/>
            <person name="Nakamura Y."/>
            <person name="Kaneko T."/>
            <person name="Katoh T."/>
            <person name="Asamizu E."/>
            <person name="Kotani H."/>
            <person name="Tabata S."/>
        </authorList>
    </citation>
    <scope>NUCLEOTIDE SEQUENCE [LARGE SCALE GENOMIC DNA]</scope>
    <source>
        <strain>cv. Columbia</strain>
    </source>
</reference>
<reference key="2">
    <citation type="journal article" date="2017" name="Plant J.">
        <title>Araport11: a complete reannotation of the Arabidopsis thaliana reference genome.</title>
        <authorList>
            <person name="Cheng C.Y."/>
            <person name="Krishnakumar V."/>
            <person name="Chan A.P."/>
            <person name="Thibaud-Nissen F."/>
            <person name="Schobel S."/>
            <person name="Town C.D."/>
        </authorList>
    </citation>
    <scope>GENOME REANNOTATION</scope>
    <source>
        <strain>cv. Columbia</strain>
    </source>
</reference>
<reference key="3">
    <citation type="journal article" date="2003" name="Science">
        <title>Empirical analysis of transcriptional activity in the Arabidopsis genome.</title>
        <authorList>
            <person name="Yamada K."/>
            <person name="Lim J."/>
            <person name="Dale J.M."/>
            <person name="Chen H."/>
            <person name="Shinn P."/>
            <person name="Palm C.J."/>
            <person name="Southwick A.M."/>
            <person name="Wu H.C."/>
            <person name="Kim C.J."/>
            <person name="Nguyen M."/>
            <person name="Pham P.K."/>
            <person name="Cheuk R.F."/>
            <person name="Karlin-Newmann G."/>
            <person name="Liu S.X."/>
            <person name="Lam B."/>
            <person name="Sakano H."/>
            <person name="Wu T."/>
            <person name="Yu G."/>
            <person name="Miranda M."/>
            <person name="Quach H.L."/>
            <person name="Tripp M."/>
            <person name="Chang C.H."/>
            <person name="Lee J.M."/>
            <person name="Toriumi M.J."/>
            <person name="Chan M.M."/>
            <person name="Tang C.C."/>
            <person name="Onodera C.S."/>
            <person name="Deng J.M."/>
            <person name="Akiyama K."/>
            <person name="Ansari Y."/>
            <person name="Arakawa T."/>
            <person name="Banh J."/>
            <person name="Banno F."/>
            <person name="Bowser L."/>
            <person name="Brooks S.Y."/>
            <person name="Carninci P."/>
            <person name="Chao Q."/>
            <person name="Choy N."/>
            <person name="Enju A."/>
            <person name="Goldsmith A.D."/>
            <person name="Gurjal M."/>
            <person name="Hansen N.F."/>
            <person name="Hayashizaki Y."/>
            <person name="Johnson-Hopson C."/>
            <person name="Hsuan V.W."/>
            <person name="Iida K."/>
            <person name="Karnes M."/>
            <person name="Khan S."/>
            <person name="Koesema E."/>
            <person name="Ishida J."/>
            <person name="Jiang P.X."/>
            <person name="Jones T."/>
            <person name="Kawai J."/>
            <person name="Kamiya A."/>
            <person name="Meyers C."/>
            <person name="Nakajima M."/>
            <person name="Narusaka M."/>
            <person name="Seki M."/>
            <person name="Sakurai T."/>
            <person name="Satou M."/>
            <person name="Tamse R."/>
            <person name="Vaysberg M."/>
            <person name="Wallender E.K."/>
            <person name="Wong C."/>
            <person name="Yamamura Y."/>
            <person name="Yuan S."/>
            <person name="Shinozaki K."/>
            <person name="Davis R.W."/>
            <person name="Theologis A."/>
            <person name="Ecker J.R."/>
        </authorList>
    </citation>
    <scope>NUCLEOTIDE SEQUENCE [LARGE SCALE MRNA]</scope>
    <source>
        <strain>cv. Columbia</strain>
    </source>
</reference>
<reference key="4">
    <citation type="submission" date="2002-03" db="EMBL/GenBank/DDBJ databases">
        <title>Full-length cDNA from Arabidopsis thaliana.</title>
        <authorList>
            <person name="Brover V.V."/>
            <person name="Troukhan M.E."/>
            <person name="Alexandrov N.A."/>
            <person name="Lu Y.-P."/>
            <person name="Flavell R.B."/>
            <person name="Feldmann K.A."/>
        </authorList>
    </citation>
    <scope>NUCLEOTIDE SEQUENCE [LARGE SCALE MRNA]</scope>
</reference>
<reference key="5">
    <citation type="journal article" date="2005" name="J. Biol. Chem.">
        <title>Comprehensive analysis of cytosolic nudix hydrolases in Arabidopsis thaliana.</title>
        <authorList>
            <person name="Ogawa T."/>
            <person name="Ueda Y."/>
            <person name="Yoshimura K."/>
            <person name="Shigeoka S."/>
        </authorList>
    </citation>
    <scope>TISSUE SPECIFICITY</scope>
</reference>
<reference key="6">
    <citation type="journal article" date="2014" name="PLoS ONE">
        <title>Functional characterization of a Nudix hydrolase AtNUDX8 upon pathogen attack indicates a positive role in plant immune responses.</title>
        <authorList>
            <person name="Fonseca J.P."/>
            <person name="Dong X."/>
        </authorList>
    </citation>
    <scope>FUNCTION</scope>
    <scope>INDUCTION</scope>
    <scope>DISRUPTION PHENOTYPE</scope>
</reference>
<protein>
    <recommendedName>
        <fullName>Nudix hydrolase 8</fullName>
        <shortName>AtNUDT8</shortName>
        <ecNumber>3.6.1.-</ecNumber>
    </recommendedName>
</protein>
<comment type="function">
    <text evidence="1 4">Probably mediates the hydrolysis of some nucleoside diphosphate derivatives (By similarity). May be involved in plant immunity and act as a positive regulator of defense response through salicylic acid (SA) signaling (PubMed:25436909).</text>
</comment>
<comment type="cofactor">
    <cofactor evidence="1">
        <name>Mg(2+)</name>
        <dbReference type="ChEBI" id="CHEBI:18420"/>
    </cofactor>
    <cofactor evidence="1">
        <name>Mn(2+)</name>
        <dbReference type="ChEBI" id="CHEBI:29035"/>
    </cofactor>
</comment>
<comment type="tissue specificity">
    <text evidence="3">Expressed in roots, stems and, at lower level, leaves.</text>
</comment>
<comment type="induction">
    <text evidence="4">Circadian regulation with a peak after 8 hours of light. Induced by abscisic acid (ABA). Down-regulated by salicylic acid (SA).</text>
</comment>
<comment type="disruption phenotype">
    <text evidence="4">Small and stunted plant phenotype when grown on 12/12 hour photoperiod light. No visible phenotype when grown under short or long day light (8/16 hours or 16/8 hours of light/dark).</text>
</comment>
<comment type="similarity">
    <text evidence="5">Belongs to the Nudix hydrolase family.</text>
</comment>
<comment type="sequence caution" evidence="5">
    <conflict type="erroneous gene model prediction">
        <sequence resource="EMBL-CDS" id="BAA97158"/>
    </conflict>
</comment>
<proteinExistence type="evidence at transcript level"/>
<dbReference type="EC" id="3.6.1.-"/>
<dbReference type="EMBL" id="AB018117">
    <property type="protein sequence ID" value="BAA97158.1"/>
    <property type="status" value="ALT_SEQ"/>
    <property type="molecule type" value="Genomic_DNA"/>
</dbReference>
<dbReference type="EMBL" id="CP002688">
    <property type="protein sequence ID" value="AED95490.1"/>
    <property type="molecule type" value="Genomic_DNA"/>
</dbReference>
<dbReference type="EMBL" id="AY125502">
    <property type="protein sequence ID" value="AAM78094.1"/>
    <property type="molecule type" value="mRNA"/>
</dbReference>
<dbReference type="EMBL" id="BT000563">
    <property type="protein sequence ID" value="AAN18132.1"/>
    <property type="molecule type" value="mRNA"/>
</dbReference>
<dbReference type="EMBL" id="AY087784">
    <property type="protein sequence ID" value="AAM65320.1"/>
    <property type="molecule type" value="mRNA"/>
</dbReference>
<dbReference type="RefSeq" id="NP_568680.1">
    <property type="nucleotide sequence ID" value="NM_124095.4"/>
</dbReference>
<dbReference type="SMR" id="Q8L7W2"/>
<dbReference type="FunCoup" id="Q8L7W2">
    <property type="interactions" value="340"/>
</dbReference>
<dbReference type="STRING" id="3702.Q8L7W2"/>
<dbReference type="PaxDb" id="3702-AT5G47240.1"/>
<dbReference type="ProteomicsDB" id="248889"/>
<dbReference type="EnsemblPlants" id="AT5G47240.1">
    <property type="protein sequence ID" value="AT5G47240.1"/>
    <property type="gene ID" value="AT5G47240"/>
</dbReference>
<dbReference type="GeneID" id="834771"/>
<dbReference type="Gramene" id="AT5G47240.1">
    <property type="protein sequence ID" value="AT5G47240.1"/>
    <property type="gene ID" value="AT5G47240"/>
</dbReference>
<dbReference type="KEGG" id="ath:AT5G47240"/>
<dbReference type="Araport" id="AT5G47240"/>
<dbReference type="TAIR" id="AT5G47240">
    <property type="gene designation" value="NUDT8"/>
</dbReference>
<dbReference type="eggNOG" id="KOG0648">
    <property type="taxonomic scope" value="Eukaryota"/>
</dbReference>
<dbReference type="HOGENOM" id="CLU_054299_0_0_1"/>
<dbReference type="InParanoid" id="Q8L7W2"/>
<dbReference type="OrthoDB" id="447842at2759"/>
<dbReference type="PhylomeDB" id="Q8L7W2"/>
<dbReference type="PRO" id="PR:Q8L7W2"/>
<dbReference type="Proteomes" id="UP000006548">
    <property type="component" value="Chromosome 5"/>
</dbReference>
<dbReference type="ExpressionAtlas" id="Q8L7W2">
    <property type="expression patterns" value="baseline and differential"/>
</dbReference>
<dbReference type="GO" id="GO:0005829">
    <property type="term" value="C:cytosol"/>
    <property type="evidence" value="ECO:0000255"/>
    <property type="project" value="TAIR"/>
</dbReference>
<dbReference type="GO" id="GO:0016787">
    <property type="term" value="F:hydrolase activity"/>
    <property type="evidence" value="ECO:0007669"/>
    <property type="project" value="UniProtKB-KW"/>
</dbReference>
<dbReference type="GO" id="GO:0046872">
    <property type="term" value="F:metal ion binding"/>
    <property type="evidence" value="ECO:0007669"/>
    <property type="project" value="UniProtKB-KW"/>
</dbReference>
<dbReference type="GO" id="GO:0009611">
    <property type="term" value="P:response to wounding"/>
    <property type="evidence" value="ECO:0000270"/>
    <property type="project" value="TAIR"/>
</dbReference>
<dbReference type="CDD" id="cd04670">
    <property type="entry name" value="NUDIX_ASFGF2_Nudt6"/>
    <property type="match status" value="1"/>
</dbReference>
<dbReference type="FunFam" id="3.40.630.30:FF:000016">
    <property type="entry name" value="nudix hydrolase 2"/>
    <property type="match status" value="1"/>
</dbReference>
<dbReference type="FunFam" id="3.90.79.10:FF:000015">
    <property type="entry name" value="Nudix hydrolase 8"/>
    <property type="match status" value="1"/>
</dbReference>
<dbReference type="Gene3D" id="3.40.630.30">
    <property type="match status" value="1"/>
</dbReference>
<dbReference type="Gene3D" id="3.90.79.10">
    <property type="entry name" value="Nucleoside Triphosphate Pyrophosphohydrolase"/>
    <property type="match status" value="1"/>
</dbReference>
<dbReference type="InterPro" id="IPR015797">
    <property type="entry name" value="NUDIX_hydrolase-like_dom_sf"/>
</dbReference>
<dbReference type="InterPro" id="IPR003293">
    <property type="entry name" value="Nudix_hydrolase6-like"/>
</dbReference>
<dbReference type="InterPro" id="IPR020084">
    <property type="entry name" value="NUDIX_hydrolase_CS"/>
</dbReference>
<dbReference type="InterPro" id="IPR000086">
    <property type="entry name" value="NUDIX_hydrolase_dom"/>
</dbReference>
<dbReference type="InterPro" id="IPR040618">
    <property type="entry name" value="Pre-Nudix"/>
</dbReference>
<dbReference type="PANTHER" id="PTHR13994:SF13">
    <property type="entry name" value="FI03680P"/>
    <property type="match status" value="1"/>
</dbReference>
<dbReference type="PANTHER" id="PTHR13994">
    <property type="entry name" value="NUDIX HYDROLASE RELATED"/>
    <property type="match status" value="1"/>
</dbReference>
<dbReference type="Pfam" id="PF00293">
    <property type="entry name" value="NUDIX"/>
    <property type="match status" value="1"/>
</dbReference>
<dbReference type="Pfam" id="PF18290">
    <property type="entry name" value="Nudix_hydro"/>
    <property type="match status" value="1"/>
</dbReference>
<dbReference type="PRINTS" id="PR01356">
    <property type="entry name" value="GFGPROTEIN"/>
</dbReference>
<dbReference type="SUPFAM" id="SSF55811">
    <property type="entry name" value="Nudix"/>
    <property type="match status" value="1"/>
</dbReference>
<dbReference type="PROSITE" id="PS51462">
    <property type="entry name" value="NUDIX"/>
    <property type="match status" value="1"/>
</dbReference>
<dbReference type="PROSITE" id="PS00893">
    <property type="entry name" value="NUDIX_BOX"/>
    <property type="match status" value="1"/>
</dbReference>
<organism>
    <name type="scientific">Arabidopsis thaliana</name>
    <name type="common">Mouse-ear cress</name>
    <dbReference type="NCBI Taxonomy" id="3702"/>
    <lineage>
        <taxon>Eukaryota</taxon>
        <taxon>Viridiplantae</taxon>
        <taxon>Streptophyta</taxon>
        <taxon>Embryophyta</taxon>
        <taxon>Tracheophyta</taxon>
        <taxon>Spermatophyta</taxon>
        <taxon>Magnoliopsida</taxon>
        <taxon>eudicotyledons</taxon>
        <taxon>Gunneridae</taxon>
        <taxon>Pentapetalae</taxon>
        <taxon>rosids</taxon>
        <taxon>malvids</taxon>
        <taxon>Brassicales</taxon>
        <taxon>Brassicaceae</taxon>
        <taxon>Camelineae</taxon>
        <taxon>Arabidopsis</taxon>
    </lineage>
</organism>
<feature type="chain" id="PRO_0000057128" description="Nudix hydrolase 8">
    <location>
        <begin position="1"/>
        <end position="369"/>
    </location>
</feature>
<feature type="domain" description="Nudix hydrolase" evidence="2">
    <location>
        <begin position="188"/>
        <end position="318"/>
    </location>
</feature>
<feature type="short sequence motif" description="Nudix box">
    <location>
        <begin position="225"/>
        <end position="246"/>
    </location>
</feature>
<feature type="binding site" evidence="1">
    <location>
        <position position="240"/>
    </location>
    <ligand>
        <name>Mg(2+)</name>
        <dbReference type="ChEBI" id="CHEBI:18420"/>
    </ligand>
</feature>
<feature type="binding site" evidence="1">
    <location>
        <position position="244"/>
    </location>
    <ligand>
        <name>Mg(2+)</name>
        <dbReference type="ChEBI" id="CHEBI:18420"/>
    </ligand>
</feature>
<feature type="sequence conflict" description="In Ref. 4; AAM65320." evidence="5" ref="4">
    <original>KG</original>
    <variation>RE</variation>
    <location>
        <begin position="13"/>
        <end position="14"/>
    </location>
</feature>
<feature type="sequence conflict" description="In Ref. 4; AAM65320." evidence="5" ref="4">
    <original>R</original>
    <variation>RLR</variation>
    <location>
        <position position="25"/>
    </location>
</feature>
<feature type="sequence conflict" description="In Ref. 4; AAM65320." evidence="5" ref="4">
    <original>E</original>
    <variation>K</variation>
    <location>
        <position position="177"/>
    </location>
</feature>
<feature type="sequence conflict" description="In Ref. 3; AAM78094/AAN18132." evidence="5" ref="3">
    <original>C</original>
    <variation>S</variation>
    <location>
        <position position="212"/>
    </location>
</feature>